<dbReference type="EC" id="2.1.3.15" evidence="1"/>
<dbReference type="EMBL" id="BA000043">
    <property type="protein sequence ID" value="BAD77027.1"/>
    <property type="molecule type" value="Genomic_DNA"/>
</dbReference>
<dbReference type="RefSeq" id="WP_011232216.1">
    <property type="nucleotide sequence ID" value="NC_006510.1"/>
</dbReference>
<dbReference type="SMR" id="Q5KWA9"/>
<dbReference type="STRING" id="235909.GK2742"/>
<dbReference type="GeneID" id="32064642"/>
<dbReference type="KEGG" id="gka:GK2742"/>
<dbReference type="eggNOG" id="COG0777">
    <property type="taxonomic scope" value="Bacteria"/>
</dbReference>
<dbReference type="HOGENOM" id="CLU_015486_1_1_9"/>
<dbReference type="UniPathway" id="UPA00655">
    <property type="reaction ID" value="UER00711"/>
</dbReference>
<dbReference type="Proteomes" id="UP000001172">
    <property type="component" value="Chromosome"/>
</dbReference>
<dbReference type="GO" id="GO:0009317">
    <property type="term" value="C:acetyl-CoA carboxylase complex"/>
    <property type="evidence" value="ECO:0007669"/>
    <property type="project" value="InterPro"/>
</dbReference>
<dbReference type="GO" id="GO:0003989">
    <property type="term" value="F:acetyl-CoA carboxylase activity"/>
    <property type="evidence" value="ECO:0007669"/>
    <property type="project" value="InterPro"/>
</dbReference>
<dbReference type="GO" id="GO:0005524">
    <property type="term" value="F:ATP binding"/>
    <property type="evidence" value="ECO:0007669"/>
    <property type="project" value="UniProtKB-KW"/>
</dbReference>
<dbReference type="GO" id="GO:0016743">
    <property type="term" value="F:carboxyl- or carbamoyltransferase activity"/>
    <property type="evidence" value="ECO:0007669"/>
    <property type="project" value="UniProtKB-UniRule"/>
</dbReference>
<dbReference type="GO" id="GO:0008270">
    <property type="term" value="F:zinc ion binding"/>
    <property type="evidence" value="ECO:0007669"/>
    <property type="project" value="UniProtKB-UniRule"/>
</dbReference>
<dbReference type="GO" id="GO:0006633">
    <property type="term" value="P:fatty acid biosynthetic process"/>
    <property type="evidence" value="ECO:0007669"/>
    <property type="project" value="UniProtKB-KW"/>
</dbReference>
<dbReference type="GO" id="GO:2001295">
    <property type="term" value="P:malonyl-CoA biosynthetic process"/>
    <property type="evidence" value="ECO:0007669"/>
    <property type="project" value="UniProtKB-UniRule"/>
</dbReference>
<dbReference type="Gene3D" id="3.90.226.10">
    <property type="entry name" value="2-enoyl-CoA Hydratase, Chain A, domain 1"/>
    <property type="match status" value="1"/>
</dbReference>
<dbReference type="HAMAP" id="MF_01395">
    <property type="entry name" value="AcetylCoA_CT_beta"/>
    <property type="match status" value="1"/>
</dbReference>
<dbReference type="InterPro" id="IPR034733">
    <property type="entry name" value="AcCoA_carboxyl_beta"/>
</dbReference>
<dbReference type="InterPro" id="IPR000438">
    <property type="entry name" value="Acetyl_CoA_COase_Trfase_b_su"/>
</dbReference>
<dbReference type="InterPro" id="IPR029045">
    <property type="entry name" value="ClpP/crotonase-like_dom_sf"/>
</dbReference>
<dbReference type="InterPro" id="IPR011762">
    <property type="entry name" value="COA_CT_N"/>
</dbReference>
<dbReference type="InterPro" id="IPR041010">
    <property type="entry name" value="Znf-ACC"/>
</dbReference>
<dbReference type="NCBIfam" id="TIGR00515">
    <property type="entry name" value="accD"/>
    <property type="match status" value="1"/>
</dbReference>
<dbReference type="PANTHER" id="PTHR42995">
    <property type="entry name" value="ACETYL-COENZYME A CARBOXYLASE CARBOXYL TRANSFERASE SUBUNIT BETA, CHLOROPLASTIC"/>
    <property type="match status" value="1"/>
</dbReference>
<dbReference type="PANTHER" id="PTHR42995:SF5">
    <property type="entry name" value="ACETYL-COENZYME A CARBOXYLASE CARBOXYL TRANSFERASE SUBUNIT BETA, CHLOROPLASTIC"/>
    <property type="match status" value="1"/>
</dbReference>
<dbReference type="Pfam" id="PF01039">
    <property type="entry name" value="Carboxyl_trans"/>
    <property type="match status" value="1"/>
</dbReference>
<dbReference type="Pfam" id="PF17848">
    <property type="entry name" value="Zn_ribbon_ACC"/>
    <property type="match status" value="1"/>
</dbReference>
<dbReference type="PRINTS" id="PR01070">
    <property type="entry name" value="ACCCTRFRASEB"/>
</dbReference>
<dbReference type="SUPFAM" id="SSF52096">
    <property type="entry name" value="ClpP/crotonase"/>
    <property type="match status" value="1"/>
</dbReference>
<dbReference type="PROSITE" id="PS50980">
    <property type="entry name" value="COA_CT_NTER"/>
    <property type="match status" value="1"/>
</dbReference>
<evidence type="ECO:0000255" key="1">
    <source>
        <dbReference type="HAMAP-Rule" id="MF_01395"/>
    </source>
</evidence>
<evidence type="ECO:0000255" key="2">
    <source>
        <dbReference type="PROSITE-ProRule" id="PRU01136"/>
    </source>
</evidence>
<reference key="1">
    <citation type="journal article" date="2004" name="Nucleic Acids Res.">
        <title>Thermoadaptation trait revealed by the genome sequence of thermophilic Geobacillus kaustophilus.</title>
        <authorList>
            <person name="Takami H."/>
            <person name="Takaki Y."/>
            <person name="Chee G.-J."/>
            <person name="Nishi S."/>
            <person name="Shimamura S."/>
            <person name="Suzuki H."/>
            <person name="Matsui S."/>
            <person name="Uchiyama I."/>
        </authorList>
    </citation>
    <scope>NUCLEOTIDE SEQUENCE [LARGE SCALE GENOMIC DNA]</scope>
    <source>
        <strain>HTA426</strain>
    </source>
</reference>
<gene>
    <name evidence="1" type="primary">accD</name>
    <name type="ordered locus">GK2742</name>
</gene>
<feature type="chain" id="PRO_0000389746" description="Acetyl-coenzyme A carboxylase carboxyl transferase subunit beta">
    <location>
        <begin position="1"/>
        <end position="290"/>
    </location>
</feature>
<feature type="domain" description="CoA carboxyltransferase N-terminal" evidence="2">
    <location>
        <begin position="28"/>
        <end position="290"/>
    </location>
</feature>
<feature type="zinc finger region" description="C4-type" evidence="1">
    <location>
        <begin position="32"/>
        <end position="54"/>
    </location>
</feature>
<feature type="binding site" evidence="1">
    <location>
        <position position="32"/>
    </location>
    <ligand>
        <name>Zn(2+)</name>
        <dbReference type="ChEBI" id="CHEBI:29105"/>
    </ligand>
</feature>
<feature type="binding site" evidence="1">
    <location>
        <position position="35"/>
    </location>
    <ligand>
        <name>Zn(2+)</name>
        <dbReference type="ChEBI" id="CHEBI:29105"/>
    </ligand>
</feature>
<feature type="binding site" evidence="1">
    <location>
        <position position="51"/>
    </location>
    <ligand>
        <name>Zn(2+)</name>
        <dbReference type="ChEBI" id="CHEBI:29105"/>
    </ligand>
</feature>
<feature type="binding site" evidence="1">
    <location>
        <position position="54"/>
    </location>
    <ligand>
        <name>Zn(2+)</name>
        <dbReference type="ChEBI" id="CHEBI:29105"/>
    </ligand>
</feature>
<sequence length="290" mass="32230">MWKDLFVKKKKYAPLPSEQARHEVPEGVMTKCPQCKKIMYTKELIKNLRVCLSCGYHHPMPARERIASLLDDGSFREYDADMISVNPLGFPGYIEKLEEDRRKSGLNEAVVTGEGALDGHPLVIAVMDSSFRMGSMGSVVGEKITRAVERAREQQMPFLIFTASGGARMQEGVLSLMQMAKTSAALKRFSNDGGLFISVMTHPTTGGVSASFASLGDYNFAEPGALIGFAGRRVIEQTVREELPDDFQTAEFLLKHGQLDAVIHRHELKETLAVVLDLHQKGGEEGWWRN</sequence>
<keyword id="KW-0067">ATP-binding</keyword>
<keyword id="KW-0963">Cytoplasm</keyword>
<keyword id="KW-0275">Fatty acid biosynthesis</keyword>
<keyword id="KW-0276">Fatty acid metabolism</keyword>
<keyword id="KW-0444">Lipid biosynthesis</keyword>
<keyword id="KW-0443">Lipid metabolism</keyword>
<keyword id="KW-0479">Metal-binding</keyword>
<keyword id="KW-0547">Nucleotide-binding</keyword>
<keyword id="KW-1185">Reference proteome</keyword>
<keyword id="KW-0808">Transferase</keyword>
<keyword id="KW-0862">Zinc</keyword>
<keyword id="KW-0863">Zinc-finger</keyword>
<organism>
    <name type="scientific">Geobacillus kaustophilus (strain HTA426)</name>
    <dbReference type="NCBI Taxonomy" id="235909"/>
    <lineage>
        <taxon>Bacteria</taxon>
        <taxon>Bacillati</taxon>
        <taxon>Bacillota</taxon>
        <taxon>Bacilli</taxon>
        <taxon>Bacillales</taxon>
        <taxon>Anoxybacillaceae</taxon>
        <taxon>Geobacillus</taxon>
        <taxon>Geobacillus thermoleovorans group</taxon>
    </lineage>
</organism>
<protein>
    <recommendedName>
        <fullName evidence="1">Acetyl-coenzyme A carboxylase carboxyl transferase subunit beta</fullName>
        <shortName evidence="1">ACCase subunit beta</shortName>
        <shortName evidence="1">Acetyl-CoA carboxylase carboxyltransferase subunit beta</shortName>
        <ecNumber evidence="1">2.1.3.15</ecNumber>
    </recommendedName>
</protein>
<name>ACCD_GEOKA</name>
<accession>Q5KWA9</accession>
<comment type="function">
    <text evidence="1">Component of the acetyl coenzyme A carboxylase (ACC) complex. Biotin carboxylase (BC) catalyzes the carboxylation of biotin on its carrier protein (BCCP) and then the CO(2) group is transferred by the transcarboxylase to acetyl-CoA to form malonyl-CoA.</text>
</comment>
<comment type="catalytic activity">
    <reaction evidence="1">
        <text>N(6)-carboxybiotinyl-L-lysyl-[protein] + acetyl-CoA = N(6)-biotinyl-L-lysyl-[protein] + malonyl-CoA</text>
        <dbReference type="Rhea" id="RHEA:54728"/>
        <dbReference type="Rhea" id="RHEA-COMP:10505"/>
        <dbReference type="Rhea" id="RHEA-COMP:10506"/>
        <dbReference type="ChEBI" id="CHEBI:57288"/>
        <dbReference type="ChEBI" id="CHEBI:57384"/>
        <dbReference type="ChEBI" id="CHEBI:83144"/>
        <dbReference type="ChEBI" id="CHEBI:83145"/>
        <dbReference type="EC" id="2.1.3.15"/>
    </reaction>
</comment>
<comment type="cofactor">
    <cofactor evidence="1">
        <name>Zn(2+)</name>
        <dbReference type="ChEBI" id="CHEBI:29105"/>
    </cofactor>
    <text evidence="1">Binds 1 zinc ion per subunit.</text>
</comment>
<comment type="pathway">
    <text evidence="1">Lipid metabolism; malonyl-CoA biosynthesis; malonyl-CoA from acetyl-CoA: step 1/1.</text>
</comment>
<comment type="subunit">
    <text evidence="1">Acetyl-CoA carboxylase is a heterohexamer composed of biotin carboxyl carrier protein (AccB), biotin carboxylase (AccC) and two subunits each of ACCase subunit alpha (AccA) and ACCase subunit beta (AccD).</text>
</comment>
<comment type="subcellular location">
    <subcellularLocation>
        <location evidence="1">Cytoplasm</location>
    </subcellularLocation>
</comment>
<comment type="similarity">
    <text evidence="1">Belongs to the AccD/PCCB family.</text>
</comment>
<proteinExistence type="inferred from homology"/>